<comment type="function">
    <text evidence="1">Catalyzes the oxidation of 5,10-methylenetetrahydrofolate to 5,10-methenyltetrahydrofolate and then the hydrolysis of 5,10-methenyltetrahydrofolate to 10-formyltetrahydrofolate.</text>
</comment>
<comment type="catalytic activity">
    <reaction evidence="1">
        <text>(6R)-5,10-methylene-5,6,7,8-tetrahydrofolate + NADP(+) = (6R)-5,10-methenyltetrahydrofolate + NADPH</text>
        <dbReference type="Rhea" id="RHEA:22812"/>
        <dbReference type="ChEBI" id="CHEBI:15636"/>
        <dbReference type="ChEBI" id="CHEBI:57455"/>
        <dbReference type="ChEBI" id="CHEBI:57783"/>
        <dbReference type="ChEBI" id="CHEBI:58349"/>
        <dbReference type="EC" id="1.5.1.5"/>
    </reaction>
</comment>
<comment type="catalytic activity">
    <reaction evidence="1">
        <text>(6R)-5,10-methenyltetrahydrofolate + H2O = (6R)-10-formyltetrahydrofolate + H(+)</text>
        <dbReference type="Rhea" id="RHEA:23700"/>
        <dbReference type="ChEBI" id="CHEBI:15377"/>
        <dbReference type="ChEBI" id="CHEBI:15378"/>
        <dbReference type="ChEBI" id="CHEBI:57455"/>
        <dbReference type="ChEBI" id="CHEBI:195366"/>
        <dbReference type="EC" id="3.5.4.9"/>
    </reaction>
</comment>
<comment type="pathway">
    <text evidence="1">One-carbon metabolism; tetrahydrofolate interconversion.</text>
</comment>
<comment type="subunit">
    <text evidence="1">Homodimer.</text>
</comment>
<comment type="similarity">
    <text evidence="1">Belongs to the tetrahydrofolate dehydrogenase/cyclohydrolase family.</text>
</comment>
<feature type="chain" id="PRO_0000265954" description="Bifunctional protein FolD">
    <location>
        <begin position="1"/>
        <end position="285"/>
    </location>
</feature>
<feature type="binding site" evidence="1">
    <location>
        <begin position="165"/>
        <end position="167"/>
    </location>
    <ligand>
        <name>NADP(+)</name>
        <dbReference type="ChEBI" id="CHEBI:58349"/>
    </ligand>
</feature>
<feature type="binding site" evidence="1">
    <location>
        <position position="190"/>
    </location>
    <ligand>
        <name>NADP(+)</name>
        <dbReference type="ChEBI" id="CHEBI:58349"/>
    </ligand>
</feature>
<sequence>MVAKILDGKQIAKDYRQGLKDQVEALQAEGYTPKLSVILVGNDGASQSYVNSKKKAAEKIGMISEIVHLDESTSEADVLNELKRLNEDDSVSGILVQVPLPDQVSEQKVLESINPAKDVDGFHPENIGKLYIDQQTFVPCTPLGIMELLNHADIDLEGKDAVVIGRSHIVGQPVSKLLLQKNASVTILHSRTKDMKRYLKNADIIVSAVGRPGLVTKEDVKEGAVVIDVGNTPDENGKLKGDIEYDEVKEVAGAITPVPGGVGPMTITMVLNNTLIAEKMRRGIE</sequence>
<dbReference type="EC" id="1.5.1.5" evidence="1"/>
<dbReference type="EC" id="3.5.4.9" evidence="1"/>
<dbReference type="EMBL" id="AP008934">
    <property type="protein sequence ID" value="BAE18872.1"/>
    <property type="molecule type" value="Genomic_DNA"/>
</dbReference>
<dbReference type="RefSeq" id="WP_011303442.1">
    <property type="nucleotide sequence ID" value="NZ_MTGA01000039.1"/>
</dbReference>
<dbReference type="SMR" id="Q49WI7"/>
<dbReference type="GeneID" id="66867902"/>
<dbReference type="KEGG" id="ssp:SSP1727"/>
<dbReference type="eggNOG" id="COG0190">
    <property type="taxonomic scope" value="Bacteria"/>
</dbReference>
<dbReference type="HOGENOM" id="CLU_034045_2_1_9"/>
<dbReference type="OrthoDB" id="9803580at2"/>
<dbReference type="UniPathway" id="UPA00193"/>
<dbReference type="Proteomes" id="UP000006371">
    <property type="component" value="Chromosome"/>
</dbReference>
<dbReference type="GO" id="GO:0005829">
    <property type="term" value="C:cytosol"/>
    <property type="evidence" value="ECO:0007669"/>
    <property type="project" value="TreeGrafter"/>
</dbReference>
<dbReference type="GO" id="GO:0004477">
    <property type="term" value="F:methenyltetrahydrofolate cyclohydrolase activity"/>
    <property type="evidence" value="ECO:0007669"/>
    <property type="project" value="UniProtKB-UniRule"/>
</dbReference>
<dbReference type="GO" id="GO:0004488">
    <property type="term" value="F:methylenetetrahydrofolate dehydrogenase (NADP+) activity"/>
    <property type="evidence" value="ECO:0007669"/>
    <property type="project" value="UniProtKB-UniRule"/>
</dbReference>
<dbReference type="GO" id="GO:0000105">
    <property type="term" value="P:L-histidine biosynthetic process"/>
    <property type="evidence" value="ECO:0007669"/>
    <property type="project" value="UniProtKB-KW"/>
</dbReference>
<dbReference type="GO" id="GO:0009086">
    <property type="term" value="P:methionine biosynthetic process"/>
    <property type="evidence" value="ECO:0007669"/>
    <property type="project" value="UniProtKB-KW"/>
</dbReference>
<dbReference type="GO" id="GO:0006164">
    <property type="term" value="P:purine nucleotide biosynthetic process"/>
    <property type="evidence" value="ECO:0007669"/>
    <property type="project" value="UniProtKB-KW"/>
</dbReference>
<dbReference type="GO" id="GO:0035999">
    <property type="term" value="P:tetrahydrofolate interconversion"/>
    <property type="evidence" value="ECO:0007669"/>
    <property type="project" value="UniProtKB-UniRule"/>
</dbReference>
<dbReference type="CDD" id="cd01080">
    <property type="entry name" value="NAD_bind_m-THF_DH_Cyclohyd"/>
    <property type="match status" value="1"/>
</dbReference>
<dbReference type="FunFam" id="3.40.50.720:FF:000094">
    <property type="entry name" value="Bifunctional protein FolD"/>
    <property type="match status" value="1"/>
</dbReference>
<dbReference type="FunFam" id="3.40.50.10860:FF:000005">
    <property type="entry name" value="C-1-tetrahydrofolate synthase, cytoplasmic, putative"/>
    <property type="match status" value="1"/>
</dbReference>
<dbReference type="Gene3D" id="3.40.50.10860">
    <property type="entry name" value="Leucine Dehydrogenase, chain A, domain 1"/>
    <property type="match status" value="1"/>
</dbReference>
<dbReference type="Gene3D" id="3.40.50.720">
    <property type="entry name" value="NAD(P)-binding Rossmann-like Domain"/>
    <property type="match status" value="1"/>
</dbReference>
<dbReference type="HAMAP" id="MF_01576">
    <property type="entry name" value="THF_DHG_CYH"/>
    <property type="match status" value="1"/>
</dbReference>
<dbReference type="InterPro" id="IPR046346">
    <property type="entry name" value="Aminoacid_DH-like_N_sf"/>
</dbReference>
<dbReference type="InterPro" id="IPR036291">
    <property type="entry name" value="NAD(P)-bd_dom_sf"/>
</dbReference>
<dbReference type="InterPro" id="IPR000672">
    <property type="entry name" value="THF_DH/CycHdrlase"/>
</dbReference>
<dbReference type="InterPro" id="IPR020630">
    <property type="entry name" value="THF_DH/CycHdrlase_cat_dom"/>
</dbReference>
<dbReference type="InterPro" id="IPR020867">
    <property type="entry name" value="THF_DH/CycHdrlase_CS"/>
</dbReference>
<dbReference type="InterPro" id="IPR020631">
    <property type="entry name" value="THF_DH/CycHdrlase_NAD-bd_dom"/>
</dbReference>
<dbReference type="NCBIfam" id="NF010772">
    <property type="entry name" value="PRK14175.1"/>
    <property type="match status" value="1"/>
</dbReference>
<dbReference type="PANTHER" id="PTHR48099:SF5">
    <property type="entry name" value="C-1-TETRAHYDROFOLATE SYNTHASE, CYTOPLASMIC"/>
    <property type="match status" value="1"/>
</dbReference>
<dbReference type="PANTHER" id="PTHR48099">
    <property type="entry name" value="C-1-TETRAHYDROFOLATE SYNTHASE, CYTOPLASMIC-RELATED"/>
    <property type="match status" value="1"/>
</dbReference>
<dbReference type="Pfam" id="PF00763">
    <property type="entry name" value="THF_DHG_CYH"/>
    <property type="match status" value="1"/>
</dbReference>
<dbReference type="Pfam" id="PF02882">
    <property type="entry name" value="THF_DHG_CYH_C"/>
    <property type="match status" value="1"/>
</dbReference>
<dbReference type="PRINTS" id="PR00085">
    <property type="entry name" value="THFDHDRGNASE"/>
</dbReference>
<dbReference type="SUPFAM" id="SSF53223">
    <property type="entry name" value="Aminoacid dehydrogenase-like, N-terminal domain"/>
    <property type="match status" value="1"/>
</dbReference>
<dbReference type="SUPFAM" id="SSF51735">
    <property type="entry name" value="NAD(P)-binding Rossmann-fold domains"/>
    <property type="match status" value="1"/>
</dbReference>
<dbReference type="PROSITE" id="PS00767">
    <property type="entry name" value="THF_DHG_CYH_2"/>
    <property type="match status" value="1"/>
</dbReference>
<evidence type="ECO:0000255" key="1">
    <source>
        <dbReference type="HAMAP-Rule" id="MF_01576"/>
    </source>
</evidence>
<proteinExistence type="inferred from homology"/>
<keyword id="KW-0028">Amino-acid biosynthesis</keyword>
<keyword id="KW-0368">Histidine biosynthesis</keyword>
<keyword id="KW-0378">Hydrolase</keyword>
<keyword id="KW-0486">Methionine biosynthesis</keyword>
<keyword id="KW-0511">Multifunctional enzyme</keyword>
<keyword id="KW-0521">NADP</keyword>
<keyword id="KW-0554">One-carbon metabolism</keyword>
<keyword id="KW-0560">Oxidoreductase</keyword>
<keyword id="KW-0658">Purine biosynthesis</keyword>
<keyword id="KW-1185">Reference proteome</keyword>
<reference key="1">
    <citation type="journal article" date="2005" name="Proc. Natl. Acad. Sci. U.S.A.">
        <title>Whole genome sequence of Staphylococcus saprophyticus reveals the pathogenesis of uncomplicated urinary tract infection.</title>
        <authorList>
            <person name="Kuroda M."/>
            <person name="Yamashita A."/>
            <person name="Hirakawa H."/>
            <person name="Kumano M."/>
            <person name="Morikawa K."/>
            <person name="Higashide M."/>
            <person name="Maruyama A."/>
            <person name="Inose Y."/>
            <person name="Matoba K."/>
            <person name="Toh H."/>
            <person name="Kuhara S."/>
            <person name="Hattori M."/>
            <person name="Ohta T."/>
        </authorList>
    </citation>
    <scope>NUCLEOTIDE SEQUENCE [LARGE SCALE GENOMIC DNA]</scope>
    <source>
        <strain>ATCC 15305 / DSM 20229 / NCIMB 8711 / NCTC 7292 / S-41</strain>
    </source>
</reference>
<organism>
    <name type="scientific">Staphylococcus saprophyticus subsp. saprophyticus (strain ATCC 15305 / DSM 20229 / NCIMB 8711 / NCTC 7292 / S-41)</name>
    <dbReference type="NCBI Taxonomy" id="342451"/>
    <lineage>
        <taxon>Bacteria</taxon>
        <taxon>Bacillati</taxon>
        <taxon>Bacillota</taxon>
        <taxon>Bacilli</taxon>
        <taxon>Bacillales</taxon>
        <taxon>Staphylococcaceae</taxon>
        <taxon>Staphylococcus</taxon>
    </lineage>
</organism>
<accession>Q49WI7</accession>
<gene>
    <name evidence="1" type="primary">folD</name>
    <name type="ordered locus">SSP1727</name>
</gene>
<protein>
    <recommendedName>
        <fullName evidence="1">Bifunctional protein FolD</fullName>
    </recommendedName>
    <domain>
        <recommendedName>
            <fullName evidence="1">Methylenetetrahydrofolate dehydrogenase</fullName>
            <ecNumber evidence="1">1.5.1.5</ecNumber>
        </recommendedName>
    </domain>
    <domain>
        <recommendedName>
            <fullName evidence="1">Methenyltetrahydrofolate cyclohydrolase</fullName>
            <ecNumber evidence="1">3.5.4.9</ecNumber>
        </recommendedName>
    </domain>
</protein>
<name>FOLD_STAS1</name>